<comment type="catalytic activity">
    <reaction evidence="1">
        <text>L-histidinol phosphate + 2-oxoglutarate = 3-(imidazol-4-yl)-2-oxopropyl phosphate + L-glutamate</text>
        <dbReference type="Rhea" id="RHEA:23744"/>
        <dbReference type="ChEBI" id="CHEBI:16810"/>
        <dbReference type="ChEBI" id="CHEBI:29985"/>
        <dbReference type="ChEBI" id="CHEBI:57766"/>
        <dbReference type="ChEBI" id="CHEBI:57980"/>
        <dbReference type="EC" id="2.6.1.9"/>
    </reaction>
</comment>
<comment type="cofactor">
    <cofactor evidence="1">
        <name>pyridoxal 5'-phosphate</name>
        <dbReference type="ChEBI" id="CHEBI:597326"/>
    </cofactor>
</comment>
<comment type="pathway">
    <text evidence="1">Amino-acid biosynthesis; L-histidine biosynthesis; L-histidine from 5-phospho-alpha-D-ribose 1-diphosphate: step 7/9.</text>
</comment>
<comment type="subunit">
    <text evidence="1">Homodimer.</text>
</comment>
<comment type="similarity">
    <text evidence="1">Belongs to the class-II pyridoxal-phosphate-dependent aminotransferase family. Histidinol-phosphate aminotransferase subfamily.</text>
</comment>
<dbReference type="EC" id="2.6.1.9" evidence="1"/>
<dbReference type="EMBL" id="CP000901">
    <property type="protein sequence ID" value="ABX87462.1"/>
    <property type="molecule type" value="Genomic_DNA"/>
</dbReference>
<dbReference type="RefSeq" id="WP_002211894.1">
    <property type="nucleotide sequence ID" value="NZ_CP009935.1"/>
</dbReference>
<dbReference type="SMR" id="A9R2K5"/>
<dbReference type="GeneID" id="57977021"/>
<dbReference type="KEGG" id="ypg:YpAngola_A3171"/>
<dbReference type="PATRIC" id="fig|349746.12.peg.4230"/>
<dbReference type="UniPathway" id="UPA00031">
    <property type="reaction ID" value="UER00012"/>
</dbReference>
<dbReference type="GO" id="GO:0004400">
    <property type="term" value="F:histidinol-phosphate transaminase activity"/>
    <property type="evidence" value="ECO:0007669"/>
    <property type="project" value="UniProtKB-UniRule"/>
</dbReference>
<dbReference type="GO" id="GO:0030170">
    <property type="term" value="F:pyridoxal phosphate binding"/>
    <property type="evidence" value="ECO:0007669"/>
    <property type="project" value="InterPro"/>
</dbReference>
<dbReference type="GO" id="GO:0000105">
    <property type="term" value="P:L-histidine biosynthetic process"/>
    <property type="evidence" value="ECO:0007669"/>
    <property type="project" value="UniProtKB-UniRule"/>
</dbReference>
<dbReference type="CDD" id="cd00609">
    <property type="entry name" value="AAT_like"/>
    <property type="match status" value="1"/>
</dbReference>
<dbReference type="Gene3D" id="3.90.1150.10">
    <property type="entry name" value="Aspartate Aminotransferase, domain 1"/>
    <property type="match status" value="1"/>
</dbReference>
<dbReference type="Gene3D" id="3.40.640.10">
    <property type="entry name" value="Type I PLP-dependent aspartate aminotransferase-like (Major domain)"/>
    <property type="match status" value="1"/>
</dbReference>
<dbReference type="HAMAP" id="MF_01023">
    <property type="entry name" value="HisC_aminotrans_2"/>
    <property type="match status" value="1"/>
</dbReference>
<dbReference type="InterPro" id="IPR001917">
    <property type="entry name" value="Aminotrans_II_pyridoxalP_BS"/>
</dbReference>
<dbReference type="InterPro" id="IPR004839">
    <property type="entry name" value="Aminotransferase_I/II_large"/>
</dbReference>
<dbReference type="InterPro" id="IPR005861">
    <property type="entry name" value="HisP_aminotrans"/>
</dbReference>
<dbReference type="InterPro" id="IPR015424">
    <property type="entry name" value="PyrdxlP-dep_Trfase"/>
</dbReference>
<dbReference type="InterPro" id="IPR015421">
    <property type="entry name" value="PyrdxlP-dep_Trfase_major"/>
</dbReference>
<dbReference type="InterPro" id="IPR015422">
    <property type="entry name" value="PyrdxlP-dep_Trfase_small"/>
</dbReference>
<dbReference type="NCBIfam" id="TIGR01141">
    <property type="entry name" value="hisC"/>
    <property type="match status" value="1"/>
</dbReference>
<dbReference type="PANTHER" id="PTHR42885:SF2">
    <property type="entry name" value="HISTIDINOL-PHOSPHATE AMINOTRANSFERASE"/>
    <property type="match status" value="1"/>
</dbReference>
<dbReference type="PANTHER" id="PTHR42885">
    <property type="entry name" value="HISTIDINOL-PHOSPHATE AMINOTRANSFERASE-RELATED"/>
    <property type="match status" value="1"/>
</dbReference>
<dbReference type="Pfam" id="PF00155">
    <property type="entry name" value="Aminotran_1_2"/>
    <property type="match status" value="1"/>
</dbReference>
<dbReference type="SUPFAM" id="SSF53383">
    <property type="entry name" value="PLP-dependent transferases"/>
    <property type="match status" value="1"/>
</dbReference>
<dbReference type="PROSITE" id="PS00599">
    <property type="entry name" value="AA_TRANSFER_CLASS_2"/>
    <property type="match status" value="1"/>
</dbReference>
<feature type="chain" id="PRO_1000135436" description="Histidinol-phosphate aminotransferase">
    <location>
        <begin position="1"/>
        <end position="382"/>
    </location>
</feature>
<feature type="region of interest" description="Disordered" evidence="2">
    <location>
        <begin position="363"/>
        <end position="382"/>
    </location>
</feature>
<feature type="modified residue" description="N6-(pyridoxal phosphate)lysine" evidence="1">
    <location>
        <position position="215"/>
    </location>
</feature>
<gene>
    <name evidence="1" type="primary">hisC</name>
    <name type="ordered locus">YpAngola_A3171</name>
</gene>
<accession>A9R2K5</accession>
<name>HIS8_YERPG</name>
<evidence type="ECO:0000255" key="1">
    <source>
        <dbReference type="HAMAP-Rule" id="MF_01023"/>
    </source>
</evidence>
<evidence type="ECO:0000256" key="2">
    <source>
        <dbReference type="SAM" id="MobiDB-lite"/>
    </source>
</evidence>
<keyword id="KW-0028">Amino-acid biosynthesis</keyword>
<keyword id="KW-0032">Aminotransferase</keyword>
<keyword id="KW-0368">Histidine biosynthesis</keyword>
<keyword id="KW-0663">Pyridoxal phosphate</keyword>
<keyword id="KW-0808">Transferase</keyword>
<organism>
    <name type="scientific">Yersinia pestis bv. Antiqua (strain Angola)</name>
    <dbReference type="NCBI Taxonomy" id="349746"/>
    <lineage>
        <taxon>Bacteria</taxon>
        <taxon>Pseudomonadati</taxon>
        <taxon>Pseudomonadota</taxon>
        <taxon>Gammaproteobacteria</taxon>
        <taxon>Enterobacterales</taxon>
        <taxon>Yersiniaceae</taxon>
        <taxon>Yersinia</taxon>
    </lineage>
</organism>
<proteinExistence type="inferred from homology"/>
<reference key="1">
    <citation type="journal article" date="2010" name="J. Bacteriol.">
        <title>Genome sequence of the deep-rooted Yersinia pestis strain Angola reveals new insights into the evolution and pangenome of the plague bacterium.</title>
        <authorList>
            <person name="Eppinger M."/>
            <person name="Worsham P.L."/>
            <person name="Nikolich M.P."/>
            <person name="Riley D.R."/>
            <person name="Sebastian Y."/>
            <person name="Mou S."/>
            <person name="Achtman M."/>
            <person name="Lindler L.E."/>
            <person name="Ravel J."/>
        </authorList>
    </citation>
    <scope>NUCLEOTIDE SEQUENCE [LARGE SCALE GENOMIC DNA]</scope>
    <source>
        <strain>Angola</strain>
    </source>
</reference>
<sequence length="382" mass="41956">MSQSNNVTDLARANIRALTPYMSARRLGGNGDVWLNANEYPLGTEYQLTTQTFNRYPECQPKHVIERYAAYAGLPPEQVLVSRGADEGIELLIRAFCEPGQDAILFCPPTYGMYAVSAETFGVERRTVPAQADWQLDLPAIANNLEQVKVIYVCSPNNPTGNLINPADLQAVLALAQGRAIVAIDEAYIEFCPQASVSNWLKDYPNLVILRTLSKAFALAGLRCGFTLANSDIIQLLLKVIAPYPLSTPVADIAAQALSPKGIEQMRQRVSEVRANRAWLQSALQDCACVEQVFTSESNYLLARFTASSSVFNALWDQGIILRDQNKQPGLANCLRITIGTRQECERVIAALAPLPGIDNSNNIDNQNKTYSQTSSIRKGTI</sequence>
<protein>
    <recommendedName>
        <fullName evidence="1">Histidinol-phosphate aminotransferase</fullName>
        <ecNumber evidence="1">2.6.1.9</ecNumber>
    </recommendedName>
    <alternativeName>
        <fullName evidence="1">Imidazole acetol-phosphate transaminase</fullName>
    </alternativeName>
</protein>